<organism>
    <name type="scientific">Pyricularia oryzae (strain 70-15 / ATCC MYA-4617 / FGSC 8958)</name>
    <name type="common">Rice blast fungus</name>
    <name type="synonym">Magnaporthe oryzae</name>
    <dbReference type="NCBI Taxonomy" id="242507"/>
    <lineage>
        <taxon>Eukaryota</taxon>
        <taxon>Fungi</taxon>
        <taxon>Dikarya</taxon>
        <taxon>Ascomycota</taxon>
        <taxon>Pezizomycotina</taxon>
        <taxon>Sordariomycetes</taxon>
        <taxon>Sordariomycetidae</taxon>
        <taxon>Magnaporthales</taxon>
        <taxon>Pyriculariaceae</taxon>
        <taxon>Pyricularia</taxon>
    </lineage>
</organism>
<keyword id="KW-0002">3D-structure</keyword>
<keyword id="KW-0436">Ligase</keyword>
<keyword id="KW-0511">Multifunctional enzyme</keyword>
<keyword id="KW-0596">Phosphopantetheine</keyword>
<keyword id="KW-0597">Phosphoprotein</keyword>
<keyword id="KW-1185">Reference proteome</keyword>
<keyword id="KW-0808">Transferase</keyword>
<keyword id="KW-0843">Virulence</keyword>
<accession>G4N137</accession>
<reference key="1">
    <citation type="journal article" date="2005" name="Nature">
        <title>The genome sequence of the rice blast fungus Magnaporthe grisea.</title>
        <authorList>
            <person name="Dean R.A."/>
            <person name="Talbot N.J."/>
            <person name="Ebbole D.J."/>
            <person name="Farman M.L."/>
            <person name="Mitchell T.K."/>
            <person name="Orbach M.J."/>
            <person name="Thon M.R."/>
            <person name="Kulkarni R."/>
            <person name="Xu J.-R."/>
            <person name="Pan H."/>
            <person name="Read N.D."/>
            <person name="Lee Y.-H."/>
            <person name="Carbone I."/>
            <person name="Brown D."/>
            <person name="Oh Y.Y."/>
            <person name="Donofrio N."/>
            <person name="Jeong J.S."/>
            <person name="Soanes D.M."/>
            <person name="Djonovic S."/>
            <person name="Kolomiets E."/>
            <person name="Rehmeyer C."/>
            <person name="Li W."/>
            <person name="Harding M."/>
            <person name="Kim S."/>
            <person name="Lebrun M.-H."/>
            <person name="Bohnert H."/>
            <person name="Coughlan S."/>
            <person name="Butler J."/>
            <person name="Calvo S.E."/>
            <person name="Ma L.-J."/>
            <person name="Nicol R."/>
            <person name="Purcell S."/>
            <person name="Nusbaum C."/>
            <person name="Galagan J.E."/>
            <person name="Birren B.W."/>
        </authorList>
    </citation>
    <scope>NUCLEOTIDE SEQUENCE [LARGE SCALE GENOMIC DNA]</scope>
    <source>
        <strain>70-15 / ATCC MYA-4617 / FGSC 8958</strain>
    </source>
</reference>
<reference key="2">
    <citation type="journal article" date="2015" name="Nat. Commun.">
        <title>Biosynthesis of the mycotoxin tenuazonic acid by a fungal NRPS-PKS hybrid enzyme.</title>
        <authorList>
            <person name="Yun C.S."/>
            <person name="Motoyama T."/>
            <person name="Osada H."/>
        </authorList>
    </citation>
    <scope>FUNCTION</scope>
    <scope>DOMAIN</scope>
    <scope>INDUCTION</scope>
    <scope>DISRUPTION PHENOTYPE</scope>
    <scope>CATALYTIC ACTIVITY</scope>
    <scope>BIOPHYSICOCHEMICAL PROPERTIES</scope>
</reference>
<reference key="3">
    <citation type="journal article" date="2017" name="ACS Chem. Biol.">
        <title>Regulatory mechanism of mycotoxin tenuazonic acid production in Pyricularia oryzae.</title>
        <authorList>
            <person name="Yun C.S."/>
            <person name="Motoyama T."/>
            <person name="Osada H."/>
        </authorList>
    </citation>
    <scope>FUNCTION</scope>
    <scope>INDUCTION</scope>
</reference>
<reference key="4">
    <citation type="journal article" date="2020" name="Front. Microbiol.">
        <title>Mycovirus-induced tenuazonic acid production in a rice blast fungus Magnaporthe oryzae.</title>
        <authorList>
            <person name="Ninomiya A."/>
            <person name="Urayama S.I."/>
            <person name="Suo R."/>
            <person name="Itoi S."/>
            <person name="Fuji S.I."/>
            <person name="Moriyama H."/>
            <person name="Hagiwara D."/>
        </authorList>
    </citation>
    <scope>FUNCTION</scope>
    <scope>INDUCTION</scope>
</reference>
<reference key="5">
    <citation type="journal article" date="2023" name="ACS Chem. Biol.">
        <title>Fungal NRPS-PKS Hybrid Enzymes Biosynthesize New gamma-Lactam Compounds, Taslactams A-D, Analogous to Actinomycete Proteasome Inhibitors.</title>
        <authorList>
            <person name="Motoyama T."/>
            <person name="Nogawa T."/>
            <person name="Shimizu T."/>
            <person name="Kawatani M."/>
            <person name="Kashiwa T."/>
            <person name="Yun C.S."/>
            <person name="Hashizume D."/>
            <person name="Osada H."/>
        </authorList>
    </citation>
    <scope>FUNCTION</scope>
    <scope>DOMAIN</scope>
</reference>
<reference evidence="13" key="6">
    <citation type="journal article" date="2020" name="J. Biol. Chem.">
        <title>Unique features of the ketosynthase domain in a nonribosomal peptide synthetase-polyketide synthase hybrid enzyme, tenuazonic acid synthetase 1.</title>
        <authorList>
            <person name="Yun C.S."/>
            <person name="Nishimoto K."/>
            <person name="Motoyama T."/>
            <person name="Shimizu T."/>
            <person name="Hino T."/>
            <person name="Dohmae N."/>
            <person name="Nagano S."/>
            <person name="Osada H."/>
        </authorList>
    </citation>
    <scope>X-RAY CRYSTALLOGRAPHY (1.68 ANGSTROMS) OF 1258-1690</scope>
    <scope>FUNCTION</scope>
    <scope>DOMAIN</scope>
    <scope>ACTIVE SITE</scope>
    <scope>BIOPHYSICOCHEMICAL PROPERTIES</scope>
    <scope>MUTAGENESIS OF CYS-1436; HIS-1579; SER-1581; ASN-1633 AND GLU-1635</scope>
</reference>
<protein>
    <recommendedName>
        <fullName evidence="9">Hybrid PKS-NRPS synthetase TAS1</fullName>
        <ecNumber evidence="5 7">6.3.2.50</ecNumber>
    </recommendedName>
    <alternativeName>
        <fullName evidence="9">Tenuazonic acid synthetase 1</fullName>
    </alternativeName>
</protein>
<comment type="function">
    <text evidence="5 6 7 8">Hybrid PKS-NRPS synthetase that mediates the biosynthesis of the toxin tenuazonic acid (TeA), an inhibitor of protein biosynthesis on ribosomes by suppressing the release of new protein (PubMed:26503170, PubMed:28820236, PubMed:32565425, PubMed:32765467). TAS1 alone is sufficient for TeA synthesis via the condensation of isoleucine (Ile) with acetoacetyl-CoA by the N-terminal NRPS module and subsequent cyclization conducted by the C-terminal KS domain (PubMed:26503170, PubMed:32565425).</text>
</comment>
<comment type="catalytic activity">
    <reaction evidence="5">
        <text>acetoacetyl-CoA + L-isoleucine + ATP = tenuazonic acid + AMP + diphosphate + CoA + 2 H(+)</text>
        <dbReference type="Rhea" id="RHEA:52800"/>
        <dbReference type="ChEBI" id="CHEBI:15378"/>
        <dbReference type="ChEBI" id="CHEBI:30616"/>
        <dbReference type="ChEBI" id="CHEBI:33019"/>
        <dbReference type="ChEBI" id="CHEBI:57286"/>
        <dbReference type="ChEBI" id="CHEBI:57287"/>
        <dbReference type="ChEBI" id="CHEBI:58045"/>
        <dbReference type="ChEBI" id="CHEBI:136842"/>
        <dbReference type="ChEBI" id="CHEBI:456215"/>
        <dbReference type="EC" id="6.3.2.50"/>
    </reaction>
    <physiologicalReaction direction="left-to-right" evidence="6 7">
        <dbReference type="Rhea" id="RHEA:52801"/>
    </physiologicalReaction>
</comment>
<comment type="cofactor">
    <cofactor evidence="2">
        <name>pantetheine 4'-phosphate</name>
        <dbReference type="ChEBI" id="CHEBI:47942"/>
    </cofactor>
</comment>
<comment type="biophysicochemical properties">
    <kinetics>
        <KM evidence="5">44.3 mM for isoleucine</KM>
        <KM evidence="5">1.2 mM for acetoacetyl-CoA</KM>
        <KM evidence="5">8.1 mM for ATP</KM>
        <KM evidence="7">0.34 mM for N-acetoacetyl-L-Ile-SNAC (for the KS domain)</KM>
    </kinetics>
</comment>
<comment type="induction">
    <text evidence="5 6 8">Expression is induced by the presence of dimethylsulphoxide (DMSO) or by the deletion of OSM1, a HOG1-related mitogen-activated protein kinase (PubMed:26503170). Expression is directly induced by the TeA-specific transcription factor TAS2 which is itself regulated by the secondary metabolism regulator LAE1 (PubMed:28820236). Infection by the totivirus activates the expression of TAS1 by up-regulating the transcription of the gene transcription factor TAS2 (PubMed:32765467).</text>
</comment>
<comment type="domain">
    <text evidence="5 7 12">TAS1 has the following domain architecture: C-A-T-KS (Probable). The N-terminal NRPS module contains the condensation (C), adenylation (A), and thiolation (T) domains and catalyzes the formation of the amide linkage between the isoleucine (Ile) with acetoacetyl-CoA (PubMed:26503170). The PKS portion of TAS1 has only a ketosynthase (KS) domain and this domain is indispensable for TAS1 activity by conducting the final cyclization step for tenuazonic acid release (PubMed:26503170, PubMed:32565425). The KS domain has intrinsic tolerance for a broad range of substrates since it is able to accept also TeA analogs containing leucine (Leu), phenylalanine (Phe) and valine (Val) instead of isoleucine (Ile) (PubMed:32565425).</text>
</comment>
<comment type="disruption phenotype">
    <text evidence="5">Impairs the production of tenuazonic acid (PubMed:26503170).</text>
</comment>
<comment type="similarity">
    <text evidence="10">In the N-terminal section; belongs to the NRP synthetase family.</text>
</comment>
<evidence type="ECO:0000255" key="1"/>
<evidence type="ECO:0000255" key="2">
    <source>
        <dbReference type="PROSITE-ProRule" id="PRU00258"/>
    </source>
</evidence>
<evidence type="ECO:0000255" key="3">
    <source>
        <dbReference type="PROSITE-ProRule" id="PRU01348"/>
    </source>
</evidence>
<evidence type="ECO:0000256" key="4">
    <source>
        <dbReference type="SAM" id="MobiDB-lite"/>
    </source>
</evidence>
<evidence type="ECO:0000269" key="5">
    <source>
    </source>
</evidence>
<evidence type="ECO:0000269" key="6">
    <source>
    </source>
</evidence>
<evidence type="ECO:0000269" key="7">
    <source>
    </source>
</evidence>
<evidence type="ECO:0000269" key="8">
    <source>
    </source>
</evidence>
<evidence type="ECO:0000303" key="9">
    <source>
    </source>
</evidence>
<evidence type="ECO:0000305" key="10"/>
<evidence type="ECO:0000305" key="11">
    <source>
    </source>
</evidence>
<evidence type="ECO:0000305" key="12">
    <source>
    </source>
</evidence>
<evidence type="ECO:0007744" key="13">
    <source>
        <dbReference type="PDB" id="6KOG"/>
    </source>
</evidence>
<evidence type="ECO:0007829" key="14">
    <source>
        <dbReference type="PDB" id="6KOG"/>
    </source>
</evidence>
<feature type="chain" id="PRO_0000438986" description="Hybrid PKS-NRPS synthetase TAS1">
    <location>
        <begin position="1"/>
        <end position="1728"/>
    </location>
</feature>
<feature type="domain" description="Carrier" evidence="2">
    <location>
        <begin position="1141"/>
        <end position="1219"/>
    </location>
</feature>
<feature type="domain" description="Ketosynthase family 3 (KS3)" evidence="3 11">
    <location>
        <begin position="1262"/>
        <end position="1714"/>
    </location>
</feature>
<feature type="region of interest" description="Condensation (C) domain" evidence="1 11">
    <location>
        <begin position="153"/>
        <end position="499"/>
    </location>
</feature>
<feature type="region of interest" description="Adenylation (A) domain" evidence="1 11">
    <location>
        <begin position="608"/>
        <end position="1002"/>
    </location>
</feature>
<feature type="region of interest" description="Disordered" evidence="4">
    <location>
        <begin position="1225"/>
        <end position="1256"/>
    </location>
</feature>
<feature type="compositionally biased region" description="Low complexity" evidence="4">
    <location>
        <begin position="1226"/>
        <end position="1237"/>
    </location>
</feature>
<feature type="compositionally biased region" description="Low complexity" evidence="4">
    <location>
        <begin position="1244"/>
        <end position="1255"/>
    </location>
</feature>
<feature type="active site" description="For beta-ketoacyl synthase activity" evidence="3 7">
    <location>
        <position position="1436"/>
    </location>
</feature>
<feature type="active site" description="For beta-ketoacyl synthase activity" evidence="3 7">
    <location>
        <position position="1579"/>
    </location>
</feature>
<feature type="active site" description="For beta-ketoacyl synthase activity" evidence="3 7">
    <location>
        <position position="1633"/>
    </location>
</feature>
<feature type="modified residue" description="O-(pantetheine 4'-phosphoryl)serine" evidence="2">
    <location>
        <position position="1177"/>
    </location>
</feature>
<feature type="mutagenesis site" description="Impairs TeA-producing activity." evidence="7">
    <original>C</original>
    <variation>A</variation>
    <location>
        <position position="1436"/>
    </location>
</feature>
<feature type="mutagenesis site" description="Decreases TeA-producing activity to 6%." evidence="7">
    <original>H</original>
    <variation>A</variation>
    <location>
        <position position="1579"/>
    </location>
</feature>
<feature type="mutagenesis site" description="Impairs TeA-producing activity." evidence="7">
    <original>H</original>
    <variation>F</variation>
    <location>
        <position position="1579"/>
    </location>
</feature>
<feature type="mutagenesis site" description="Decreases TeA-producing activity to 4%." evidence="7">
    <original>S</original>
    <variation>A</variation>
    <location>
        <position position="1581"/>
    </location>
</feature>
<feature type="mutagenesis site" description="Decreases TeA-producing activity to 67%." evidence="7">
    <original>S</original>
    <variation>T</variation>
    <location>
        <position position="1581"/>
    </location>
</feature>
<feature type="mutagenesis site" description="Decreases TeA-producing activity to 9%." evidence="7">
    <original>N</original>
    <variation>A</variation>
    <location>
        <position position="1633"/>
    </location>
</feature>
<feature type="mutagenesis site" description="Decreases TeA-producing activity to 31%." evidence="7">
    <original>N</original>
    <variation>H</variation>
    <location>
        <position position="1633"/>
    </location>
</feature>
<feature type="mutagenesis site" description="Increases by 2-fold TeA-producing activity." evidence="7">
    <original>E</original>
    <variation>A</variation>
    <location>
        <position position="1635"/>
    </location>
</feature>
<feature type="mutagenesis site" description="Does not affect TeA-producing activity." evidence="7">
    <original>E</original>
    <variation>F</variation>
    <variation>L</variation>
    <variation>Q</variation>
    <location>
        <position position="1635"/>
    </location>
</feature>
<feature type="mutagenesis site" description="Increases by 3-fold TeA-producing activity." evidence="7">
    <original>E</original>
    <variation>G</variation>
    <location>
        <position position="1635"/>
    </location>
</feature>
<feature type="strand" evidence="14">
    <location>
        <begin position="1265"/>
        <end position="1274"/>
    </location>
</feature>
<feature type="strand" evidence="14">
    <location>
        <begin position="1277"/>
        <end position="1279"/>
    </location>
</feature>
<feature type="helix" evidence="14">
    <location>
        <begin position="1280"/>
        <end position="1288"/>
    </location>
</feature>
<feature type="strand" evidence="14">
    <location>
        <begin position="1311"/>
        <end position="1314"/>
    </location>
</feature>
<feature type="strand" evidence="14">
    <location>
        <begin position="1316"/>
        <end position="1318"/>
    </location>
</feature>
<feature type="helix" evidence="14">
    <location>
        <begin position="1322"/>
        <end position="1325"/>
    </location>
</feature>
<feature type="helix" evidence="14">
    <location>
        <begin position="1328"/>
        <end position="1331"/>
    </location>
</feature>
<feature type="helix" evidence="14">
    <location>
        <begin position="1335"/>
        <end position="1338"/>
    </location>
</feature>
<feature type="helix" evidence="14">
    <location>
        <begin position="1343"/>
        <end position="1360"/>
    </location>
</feature>
<feature type="strand" evidence="14">
    <location>
        <begin position="1371"/>
        <end position="1378"/>
    </location>
</feature>
<feature type="turn" evidence="14">
    <location>
        <begin position="1383"/>
        <end position="1385"/>
    </location>
</feature>
<feature type="helix" evidence="14">
    <location>
        <begin position="1403"/>
        <end position="1406"/>
    </location>
</feature>
<feature type="turn" evidence="14">
    <location>
        <begin position="1408"/>
        <end position="1411"/>
    </location>
</feature>
<feature type="helix" evidence="14">
    <location>
        <begin position="1415"/>
        <end position="1423"/>
    </location>
</feature>
<feature type="strand" evidence="14">
    <location>
        <begin position="1429"/>
        <end position="1433"/>
    </location>
</feature>
<feature type="helix" evidence="14">
    <location>
        <begin position="1435"/>
        <end position="1437"/>
    </location>
</feature>
<feature type="helix" evidence="14">
    <location>
        <begin position="1438"/>
        <end position="1451"/>
    </location>
</feature>
<feature type="strand" evidence="14">
    <location>
        <begin position="1456"/>
        <end position="1464"/>
    </location>
</feature>
<feature type="strand" evidence="14">
    <location>
        <begin position="1471"/>
        <end position="1476"/>
    </location>
</feature>
<feature type="strand" evidence="14">
    <location>
        <begin position="1507"/>
        <end position="1515"/>
    </location>
</feature>
<feature type="helix" evidence="14">
    <location>
        <begin position="1516"/>
        <end position="1522"/>
    </location>
</feature>
<feature type="strand" evidence="14">
    <location>
        <begin position="1526"/>
        <end position="1537"/>
    </location>
</feature>
<feature type="turn" evidence="14">
    <location>
        <begin position="1539"/>
        <end position="1542"/>
    </location>
</feature>
<feature type="helix" evidence="14">
    <location>
        <begin position="1551"/>
        <end position="1565"/>
    </location>
</feature>
<feature type="helix" evidence="14">
    <location>
        <begin position="1567"/>
        <end position="1571"/>
    </location>
</feature>
<feature type="strand" evidence="14">
    <location>
        <begin position="1573"/>
        <end position="1577"/>
    </location>
</feature>
<feature type="helix" evidence="14">
    <location>
        <begin position="1584"/>
        <end position="1602"/>
    </location>
</feature>
<feature type="strand" evidence="14">
    <location>
        <begin position="1622"/>
        <end position="1625"/>
    </location>
</feature>
<feature type="helix" evidence="14">
    <location>
        <begin position="1628"/>
        <end position="1631"/>
    </location>
</feature>
<feature type="helix" evidence="14">
    <location>
        <begin position="1635"/>
        <end position="1637"/>
    </location>
</feature>
<feature type="helix" evidence="14">
    <location>
        <begin position="1638"/>
        <end position="1652"/>
    </location>
</feature>
<feature type="helix" evidence="14">
    <location>
        <begin position="1666"/>
        <end position="1668"/>
    </location>
</feature>
<feature type="strand" evidence="14">
    <location>
        <begin position="1673"/>
        <end position="1677"/>
    </location>
</feature>
<proteinExistence type="evidence at protein level"/>
<dbReference type="EC" id="6.3.2.50" evidence="5 7"/>
<dbReference type="EMBL" id="CM001233">
    <property type="protein sequence ID" value="EHA53213.1"/>
    <property type="molecule type" value="Genomic_DNA"/>
</dbReference>
<dbReference type="RefSeq" id="XP_003713020.1">
    <property type="nucleotide sequence ID" value="XM_003712972.1"/>
</dbReference>
<dbReference type="PDB" id="6KOG">
    <property type="method" value="X-ray"/>
    <property type="resolution" value="1.68 A"/>
    <property type="chains" value="A/B=1258-1690"/>
</dbReference>
<dbReference type="PDBsum" id="6KOG"/>
<dbReference type="SMR" id="G4N137"/>
<dbReference type="STRING" id="242507.G4N137"/>
<dbReference type="TCDB" id="4.C.1.1.19">
    <property type="family name" value="the fatty acid group translocation (fat) family"/>
</dbReference>
<dbReference type="EnsemblFungi" id="MGG_07803T0">
    <property type="protein sequence ID" value="MGG_07803T0"/>
    <property type="gene ID" value="MGG_07803"/>
</dbReference>
<dbReference type="GeneID" id="2683730"/>
<dbReference type="KEGG" id="mgr:MGG_07803"/>
<dbReference type="VEuPathDB" id="FungiDB:MGG_07803"/>
<dbReference type="eggNOG" id="KOG1178">
    <property type="taxonomic scope" value="Eukaryota"/>
</dbReference>
<dbReference type="eggNOG" id="KOG1202">
    <property type="taxonomic scope" value="Eukaryota"/>
</dbReference>
<dbReference type="HOGENOM" id="CLU_003656_0_0_1"/>
<dbReference type="InParanoid" id="G4N137"/>
<dbReference type="OMA" id="DGIGCGN"/>
<dbReference type="OrthoDB" id="5334845at2759"/>
<dbReference type="BioCyc" id="MetaCyc:MONOMER-20082"/>
<dbReference type="SABIO-RK" id="G4N137"/>
<dbReference type="PHI-base" id="PHI:11879"/>
<dbReference type="Proteomes" id="UP000009058">
    <property type="component" value="Chromosome 3"/>
</dbReference>
<dbReference type="GO" id="GO:0005737">
    <property type="term" value="C:cytoplasm"/>
    <property type="evidence" value="ECO:0007669"/>
    <property type="project" value="TreeGrafter"/>
</dbReference>
<dbReference type="GO" id="GO:0004315">
    <property type="term" value="F:3-oxoacyl-[acyl-carrier-protein] synthase activity"/>
    <property type="evidence" value="ECO:0007669"/>
    <property type="project" value="InterPro"/>
</dbReference>
<dbReference type="GO" id="GO:0016874">
    <property type="term" value="F:ligase activity"/>
    <property type="evidence" value="ECO:0007669"/>
    <property type="project" value="UniProtKB-KW"/>
</dbReference>
<dbReference type="GO" id="GO:0031177">
    <property type="term" value="F:phosphopantetheine binding"/>
    <property type="evidence" value="ECO:0007669"/>
    <property type="project" value="TreeGrafter"/>
</dbReference>
<dbReference type="GO" id="GO:0043041">
    <property type="term" value="P:amino acid activation for nonribosomal peptide biosynthetic process"/>
    <property type="evidence" value="ECO:0007669"/>
    <property type="project" value="TreeGrafter"/>
</dbReference>
<dbReference type="GO" id="GO:0006633">
    <property type="term" value="P:fatty acid biosynthetic process"/>
    <property type="evidence" value="ECO:0007669"/>
    <property type="project" value="InterPro"/>
</dbReference>
<dbReference type="GO" id="GO:0044550">
    <property type="term" value="P:secondary metabolite biosynthetic process"/>
    <property type="evidence" value="ECO:0007669"/>
    <property type="project" value="TreeGrafter"/>
</dbReference>
<dbReference type="CDD" id="cd17653">
    <property type="entry name" value="A_NRPS_GliP_like"/>
    <property type="match status" value="1"/>
</dbReference>
<dbReference type="CDD" id="cd00833">
    <property type="entry name" value="PKS"/>
    <property type="match status" value="1"/>
</dbReference>
<dbReference type="Gene3D" id="3.30.300.30">
    <property type="match status" value="1"/>
</dbReference>
<dbReference type="Gene3D" id="3.40.47.10">
    <property type="match status" value="1"/>
</dbReference>
<dbReference type="Gene3D" id="1.10.1200.10">
    <property type="entry name" value="ACP-like"/>
    <property type="match status" value="1"/>
</dbReference>
<dbReference type="Gene3D" id="3.30.559.10">
    <property type="entry name" value="Chloramphenicol acetyltransferase-like domain"/>
    <property type="match status" value="1"/>
</dbReference>
<dbReference type="Gene3D" id="3.40.50.12780">
    <property type="entry name" value="N-terminal domain of ligase-like"/>
    <property type="match status" value="1"/>
</dbReference>
<dbReference type="Gene3D" id="3.30.559.30">
    <property type="entry name" value="Nonribosomal peptide synthetase, condensation domain"/>
    <property type="match status" value="1"/>
</dbReference>
<dbReference type="InterPro" id="IPR010071">
    <property type="entry name" value="AA_adenyl_dom"/>
</dbReference>
<dbReference type="InterPro" id="IPR036736">
    <property type="entry name" value="ACP-like_sf"/>
</dbReference>
<dbReference type="InterPro" id="IPR045851">
    <property type="entry name" value="AMP-bd_C_sf"/>
</dbReference>
<dbReference type="InterPro" id="IPR020845">
    <property type="entry name" value="AMP-binding_CS"/>
</dbReference>
<dbReference type="InterPro" id="IPR000873">
    <property type="entry name" value="AMP-dep_synth/lig_dom"/>
</dbReference>
<dbReference type="InterPro" id="IPR042099">
    <property type="entry name" value="ANL_N_sf"/>
</dbReference>
<dbReference type="InterPro" id="IPR023213">
    <property type="entry name" value="CAT-like_dom_sf"/>
</dbReference>
<dbReference type="InterPro" id="IPR001242">
    <property type="entry name" value="Condensatn"/>
</dbReference>
<dbReference type="InterPro" id="IPR018201">
    <property type="entry name" value="Ketoacyl_synth_AS"/>
</dbReference>
<dbReference type="InterPro" id="IPR014031">
    <property type="entry name" value="Ketoacyl_synth_C"/>
</dbReference>
<dbReference type="InterPro" id="IPR014030">
    <property type="entry name" value="Ketoacyl_synth_N"/>
</dbReference>
<dbReference type="InterPro" id="IPR020841">
    <property type="entry name" value="PKS_Beta-ketoAc_synthase_dom"/>
</dbReference>
<dbReference type="InterPro" id="IPR009081">
    <property type="entry name" value="PP-bd_ACP"/>
</dbReference>
<dbReference type="InterPro" id="IPR016039">
    <property type="entry name" value="Thiolase-like"/>
</dbReference>
<dbReference type="NCBIfam" id="TIGR01733">
    <property type="entry name" value="AA-adenyl-dom"/>
    <property type="match status" value="1"/>
</dbReference>
<dbReference type="PANTHER" id="PTHR45527:SF1">
    <property type="entry name" value="FATTY ACID SYNTHASE"/>
    <property type="match status" value="1"/>
</dbReference>
<dbReference type="PANTHER" id="PTHR45527">
    <property type="entry name" value="NONRIBOSOMAL PEPTIDE SYNTHETASE"/>
    <property type="match status" value="1"/>
</dbReference>
<dbReference type="Pfam" id="PF00501">
    <property type="entry name" value="AMP-binding"/>
    <property type="match status" value="1"/>
</dbReference>
<dbReference type="Pfam" id="PF00668">
    <property type="entry name" value="Condensation"/>
    <property type="match status" value="1"/>
</dbReference>
<dbReference type="Pfam" id="PF00109">
    <property type="entry name" value="ketoacyl-synt"/>
    <property type="match status" value="1"/>
</dbReference>
<dbReference type="Pfam" id="PF02801">
    <property type="entry name" value="Ketoacyl-synt_C"/>
    <property type="match status" value="1"/>
</dbReference>
<dbReference type="Pfam" id="PF00550">
    <property type="entry name" value="PP-binding"/>
    <property type="match status" value="1"/>
</dbReference>
<dbReference type="SMART" id="SM00825">
    <property type="entry name" value="PKS_KS"/>
    <property type="match status" value="1"/>
</dbReference>
<dbReference type="SUPFAM" id="SSF56801">
    <property type="entry name" value="Acetyl-CoA synthetase-like"/>
    <property type="match status" value="1"/>
</dbReference>
<dbReference type="SUPFAM" id="SSF47336">
    <property type="entry name" value="ACP-like"/>
    <property type="match status" value="1"/>
</dbReference>
<dbReference type="SUPFAM" id="SSF52777">
    <property type="entry name" value="CoA-dependent acyltransferases"/>
    <property type="match status" value="2"/>
</dbReference>
<dbReference type="SUPFAM" id="SSF53901">
    <property type="entry name" value="Thiolase-like"/>
    <property type="match status" value="1"/>
</dbReference>
<dbReference type="PROSITE" id="PS00455">
    <property type="entry name" value="AMP_BINDING"/>
    <property type="match status" value="1"/>
</dbReference>
<dbReference type="PROSITE" id="PS00152">
    <property type="entry name" value="ATPASE_ALPHA_BETA"/>
    <property type="match status" value="1"/>
</dbReference>
<dbReference type="PROSITE" id="PS50075">
    <property type="entry name" value="CARRIER"/>
    <property type="match status" value="1"/>
</dbReference>
<dbReference type="PROSITE" id="PS00606">
    <property type="entry name" value="KS3_1"/>
    <property type="match status" value="1"/>
</dbReference>
<dbReference type="PROSITE" id="PS52004">
    <property type="entry name" value="KS3_2"/>
    <property type="match status" value="1"/>
</dbReference>
<name>TAS1_PYRO7</name>
<gene>
    <name evidence="9" type="primary">TAS1</name>
    <name type="ORF">MGG_07803</name>
</gene>
<sequence>MYNRCCRKVWIQGRVAYRPAYIRQSPPQQTLYRGIDLLPFTTIVMDHQSGFQNPSPSGGLMFSASAKRFISRIVGFVGRGAEVQQKAVGLCPLKTERRRAAAGGLLLPTGLRMGRSIIMSVRPLPFLTGPAPSPDTAAGFKPSPPTGNLVSVSPLSKAQMALWFDYLQHPTSTHYFLTLKVELDKQPLSLDKIIQVIRGLGKQHAMLRTTFHVDTDTDDMSKSYMAVHDDSWDQEIHVLMNDAQLYEALRKPFQLSSESPVRWVVQMKLQPGSARSTYTVYAAGHHIGVDGASMSVLSNQLLEAVASEVEDQPDHSGPHYGDYIQRQARYLRSSAGAAAGRFWLSQLRHTQPFRWRMEPPEEINTPNYRQLDTWNFFPTAEIQEWGNLYKTSWFRVATSIVGLVTAAMAEPQAHHDHALMVAFGARPRGFENNVSHMANTMPVKFPLSSLLRDDATFSDAVKAMGRNVSTAKKHENFPFMSLMEQANRHMDPTLLDFKVAITYSPKLANKSCELFPVEGIWDLFFCFLEQEDGVALGVISNPRVFGAEALGQLQSLFNEVFALSKARPSFKLSDLAFLQNRTPARFISGPALDDVESISKSRVYRLIKARAASQPDLVALMSAEKGVQMTYRELAAQSSQVAHFLQKQRLCKGDAVLVHLERGFAQIVWILGVMEAGACYVALDKTWPAARKEAILRTANGKLLVTDDEQMDFEKQDTTVVFLAPSAAEIASMPQSTCECEVADDDLAYVVFTSGSTGQPKGVMVEHSNLSHYVSATRSLVKTGPHSRMLQLASFAFDAIVLEYAVTLAHGGTLCFANHPEVLVGEYLADVIDSNQVNFFHCTPSVLSTLPAGRRLPSLRIVSVGGEASPPGLLDHWRKRVELLHAYGPTECTVICTLESLTQDESTQTAIDATVIGKALPNLDIRICEEGKLEPLAPNQVGEICVVGPQVSRGYMGQEELTASKFHNITLADGHPSRLYRTGDKGFIDDDGKLHIQGRIGNREIKVRGYRLDLYEVEKNVMAFDPEVTQVSIQQVGESLVALVVPASIDCDRIRSKLLKDMPRYAVPTRFIRVASLPLNTNGKIDHTQASSLAAELVMHDTVLPTVDATPTPTAAVRAVGVTEENLRLKTKENGMERQEMLRRHLTAEVTALWAKLLGSSRQFDPEVGFFDAGGHSLLLTQLHKLIKERFGTGSRPSLLDIFSMSSIRKQVDCLMGIVDQDAMLGSEPTGGSSSRSQSRRSAETSSSSTSAPSSVPVDAERNLYAIVGISCRFPGANTAEQLWNVLMEQRDAITTFCPAENLGFALEENSVFVPRYGMIDALKDFEPSAYSMSDAEAQTIDPQKRVFLDVAADALADAGTSASPGNPLDPVGVFVGAATNTFLSSRDNPGSKPPGDEEPQSFANHYQQLLDCPIGTFASFKLNLTGPVVTLNTACSSALAALHLACASLSHGDCNAAVVGGVSMAYPQEGGYVTARPGGDSSAVFSPSGVCHPLDSRADGCVPADGAAALVIKRLADARADGCRVYAVIEGVAVSADGSDDKAGLGVPSSSGQSRTVEAALRRAGPQALSRLRYVEMHGSGTPWGDALEVQGLKMAFDRLSKTGAAEQSGTGRAQPEADRIYLGSNKGNCGNTEAASGLLSLIKASMALNLGVVPPLPNLAEPNPKCEFEETKFEPLGKQLALAPGDRVMNKRQRIVRSPNWISDATWFVISTVDNLLPKLTPAAVA</sequence>